<name>NDK_CHLTB</name>
<sequence>MEQTLSIIKPDSVGKAHIGEIIAIFEKSGLRIAAMKMVHLSVKEAEGFYVVHKERPFFQELVDFMISGPVVVMVLQGENAVARNRELMGATNPKEAAEGSIRALFGESIGVNAVHGSDSLENAAIEVSYFFAKTEVVNSVA</sequence>
<comment type="function">
    <text evidence="1">Major role in the synthesis of nucleoside triphosphates other than ATP. The ATP gamma phosphate is transferred to the NDP beta phosphate via a ping-pong mechanism, using a phosphorylated active-site intermediate.</text>
</comment>
<comment type="catalytic activity">
    <reaction evidence="1">
        <text>a 2'-deoxyribonucleoside 5'-diphosphate + ATP = a 2'-deoxyribonucleoside 5'-triphosphate + ADP</text>
        <dbReference type="Rhea" id="RHEA:44640"/>
        <dbReference type="ChEBI" id="CHEBI:30616"/>
        <dbReference type="ChEBI" id="CHEBI:61560"/>
        <dbReference type="ChEBI" id="CHEBI:73316"/>
        <dbReference type="ChEBI" id="CHEBI:456216"/>
        <dbReference type="EC" id="2.7.4.6"/>
    </reaction>
</comment>
<comment type="catalytic activity">
    <reaction evidence="1">
        <text>a ribonucleoside 5'-diphosphate + ATP = a ribonucleoside 5'-triphosphate + ADP</text>
        <dbReference type="Rhea" id="RHEA:18113"/>
        <dbReference type="ChEBI" id="CHEBI:30616"/>
        <dbReference type="ChEBI" id="CHEBI:57930"/>
        <dbReference type="ChEBI" id="CHEBI:61557"/>
        <dbReference type="ChEBI" id="CHEBI:456216"/>
        <dbReference type="EC" id="2.7.4.6"/>
    </reaction>
</comment>
<comment type="cofactor">
    <cofactor evidence="1">
        <name>Mg(2+)</name>
        <dbReference type="ChEBI" id="CHEBI:18420"/>
    </cofactor>
</comment>
<comment type="subunit">
    <text evidence="1">Homotetramer.</text>
</comment>
<comment type="subcellular location">
    <subcellularLocation>
        <location evidence="1">Cytoplasm</location>
    </subcellularLocation>
</comment>
<comment type="similarity">
    <text evidence="1">Belongs to the NDK family.</text>
</comment>
<evidence type="ECO:0000255" key="1">
    <source>
        <dbReference type="HAMAP-Rule" id="MF_00451"/>
    </source>
</evidence>
<dbReference type="EC" id="2.7.4.6" evidence="1"/>
<dbReference type="EMBL" id="AM884177">
    <property type="protein sequence ID" value="CAP07154.1"/>
    <property type="molecule type" value="Genomic_DNA"/>
</dbReference>
<dbReference type="RefSeq" id="WP_009873861.1">
    <property type="nucleotide sequence ID" value="NC_010280.2"/>
</dbReference>
<dbReference type="SMR" id="B0BCD9"/>
<dbReference type="KEGG" id="ctl:CTLon_0757"/>
<dbReference type="HOGENOM" id="CLU_060216_8_1_0"/>
<dbReference type="Proteomes" id="UP001154401">
    <property type="component" value="Chromosome"/>
</dbReference>
<dbReference type="GO" id="GO:0005737">
    <property type="term" value="C:cytoplasm"/>
    <property type="evidence" value="ECO:0007669"/>
    <property type="project" value="UniProtKB-SubCell"/>
</dbReference>
<dbReference type="GO" id="GO:0005524">
    <property type="term" value="F:ATP binding"/>
    <property type="evidence" value="ECO:0007669"/>
    <property type="project" value="UniProtKB-UniRule"/>
</dbReference>
<dbReference type="GO" id="GO:0046872">
    <property type="term" value="F:metal ion binding"/>
    <property type="evidence" value="ECO:0007669"/>
    <property type="project" value="UniProtKB-KW"/>
</dbReference>
<dbReference type="GO" id="GO:0004550">
    <property type="term" value="F:nucleoside diphosphate kinase activity"/>
    <property type="evidence" value="ECO:0007669"/>
    <property type="project" value="UniProtKB-UniRule"/>
</dbReference>
<dbReference type="GO" id="GO:0006241">
    <property type="term" value="P:CTP biosynthetic process"/>
    <property type="evidence" value="ECO:0007669"/>
    <property type="project" value="UniProtKB-UniRule"/>
</dbReference>
<dbReference type="GO" id="GO:0006183">
    <property type="term" value="P:GTP biosynthetic process"/>
    <property type="evidence" value="ECO:0007669"/>
    <property type="project" value="UniProtKB-UniRule"/>
</dbReference>
<dbReference type="GO" id="GO:0006228">
    <property type="term" value="P:UTP biosynthetic process"/>
    <property type="evidence" value="ECO:0007669"/>
    <property type="project" value="UniProtKB-UniRule"/>
</dbReference>
<dbReference type="CDD" id="cd04413">
    <property type="entry name" value="NDPk_I"/>
    <property type="match status" value="1"/>
</dbReference>
<dbReference type="FunFam" id="3.30.70.141:FF:000001">
    <property type="entry name" value="Nucleoside diphosphate kinase"/>
    <property type="match status" value="1"/>
</dbReference>
<dbReference type="Gene3D" id="3.30.70.141">
    <property type="entry name" value="Nucleoside diphosphate kinase-like domain"/>
    <property type="match status" value="1"/>
</dbReference>
<dbReference type="HAMAP" id="MF_00451">
    <property type="entry name" value="NDP_kinase"/>
    <property type="match status" value="1"/>
</dbReference>
<dbReference type="InterPro" id="IPR034907">
    <property type="entry name" value="NDK-like_dom"/>
</dbReference>
<dbReference type="InterPro" id="IPR036850">
    <property type="entry name" value="NDK-like_dom_sf"/>
</dbReference>
<dbReference type="InterPro" id="IPR001564">
    <property type="entry name" value="Nucleoside_diP_kinase"/>
</dbReference>
<dbReference type="InterPro" id="IPR023005">
    <property type="entry name" value="Nucleoside_diP_kinase_AS"/>
</dbReference>
<dbReference type="NCBIfam" id="NF001908">
    <property type="entry name" value="PRK00668.1"/>
    <property type="match status" value="1"/>
</dbReference>
<dbReference type="PANTHER" id="PTHR46161">
    <property type="entry name" value="NUCLEOSIDE DIPHOSPHATE KINASE"/>
    <property type="match status" value="1"/>
</dbReference>
<dbReference type="PANTHER" id="PTHR46161:SF3">
    <property type="entry name" value="NUCLEOSIDE DIPHOSPHATE KINASE DDB_G0292928-RELATED"/>
    <property type="match status" value="1"/>
</dbReference>
<dbReference type="Pfam" id="PF00334">
    <property type="entry name" value="NDK"/>
    <property type="match status" value="1"/>
</dbReference>
<dbReference type="PRINTS" id="PR01243">
    <property type="entry name" value="NUCDPKINASE"/>
</dbReference>
<dbReference type="SMART" id="SM00562">
    <property type="entry name" value="NDK"/>
    <property type="match status" value="1"/>
</dbReference>
<dbReference type="SUPFAM" id="SSF54919">
    <property type="entry name" value="Nucleoside diphosphate kinase, NDK"/>
    <property type="match status" value="1"/>
</dbReference>
<dbReference type="PROSITE" id="PS00469">
    <property type="entry name" value="NDPK"/>
    <property type="match status" value="1"/>
</dbReference>
<dbReference type="PROSITE" id="PS51374">
    <property type="entry name" value="NDPK_LIKE"/>
    <property type="match status" value="1"/>
</dbReference>
<feature type="chain" id="PRO_1000124948" description="Nucleoside diphosphate kinase">
    <location>
        <begin position="1"/>
        <end position="141"/>
    </location>
</feature>
<feature type="active site" description="Pros-phosphohistidine intermediate" evidence="1">
    <location>
        <position position="115"/>
    </location>
</feature>
<feature type="binding site" evidence="1">
    <location>
        <position position="9"/>
    </location>
    <ligand>
        <name>ATP</name>
        <dbReference type="ChEBI" id="CHEBI:30616"/>
    </ligand>
</feature>
<feature type="binding site" evidence="1">
    <location>
        <position position="57"/>
    </location>
    <ligand>
        <name>ATP</name>
        <dbReference type="ChEBI" id="CHEBI:30616"/>
    </ligand>
</feature>
<feature type="binding site" evidence="1">
    <location>
        <position position="85"/>
    </location>
    <ligand>
        <name>ATP</name>
        <dbReference type="ChEBI" id="CHEBI:30616"/>
    </ligand>
</feature>
<feature type="binding site" evidence="1">
    <location>
        <position position="91"/>
    </location>
    <ligand>
        <name>ATP</name>
        <dbReference type="ChEBI" id="CHEBI:30616"/>
    </ligand>
</feature>
<feature type="binding site" evidence="1">
    <location>
        <position position="102"/>
    </location>
    <ligand>
        <name>ATP</name>
        <dbReference type="ChEBI" id="CHEBI:30616"/>
    </ligand>
</feature>
<feature type="binding site" evidence="1">
    <location>
        <position position="112"/>
    </location>
    <ligand>
        <name>ATP</name>
        <dbReference type="ChEBI" id="CHEBI:30616"/>
    </ligand>
</feature>
<keyword id="KW-0067">ATP-binding</keyword>
<keyword id="KW-0963">Cytoplasm</keyword>
<keyword id="KW-0418">Kinase</keyword>
<keyword id="KW-0460">Magnesium</keyword>
<keyword id="KW-0479">Metal-binding</keyword>
<keyword id="KW-0546">Nucleotide metabolism</keyword>
<keyword id="KW-0547">Nucleotide-binding</keyword>
<keyword id="KW-0597">Phosphoprotein</keyword>
<keyword id="KW-0808">Transferase</keyword>
<accession>B0BCD9</accession>
<gene>
    <name evidence="1" type="primary">ndk</name>
    <name type="ordered locus">CTLon_0757</name>
</gene>
<proteinExistence type="inferred from homology"/>
<organism>
    <name type="scientific">Chlamydia trachomatis serovar L2b (strain UCH-1/proctitis)</name>
    <dbReference type="NCBI Taxonomy" id="471473"/>
    <lineage>
        <taxon>Bacteria</taxon>
        <taxon>Pseudomonadati</taxon>
        <taxon>Chlamydiota</taxon>
        <taxon>Chlamydiia</taxon>
        <taxon>Chlamydiales</taxon>
        <taxon>Chlamydiaceae</taxon>
        <taxon>Chlamydia/Chlamydophila group</taxon>
        <taxon>Chlamydia</taxon>
    </lineage>
</organism>
<protein>
    <recommendedName>
        <fullName evidence="1">Nucleoside diphosphate kinase</fullName>
        <shortName evidence="1">NDK</shortName>
        <shortName evidence="1">NDP kinase</shortName>
        <ecNumber evidence="1">2.7.4.6</ecNumber>
    </recommendedName>
    <alternativeName>
        <fullName evidence="1">Nucleoside-2-P kinase</fullName>
    </alternativeName>
</protein>
<reference key="1">
    <citation type="journal article" date="2008" name="Genome Res.">
        <title>Chlamydia trachomatis: genome sequence analysis of lymphogranuloma venereum isolates.</title>
        <authorList>
            <person name="Thomson N.R."/>
            <person name="Holden M.T.G."/>
            <person name="Carder C."/>
            <person name="Lennard N."/>
            <person name="Lockey S.J."/>
            <person name="Marsh P."/>
            <person name="Skipp P."/>
            <person name="O'Connor C.D."/>
            <person name="Goodhead I."/>
            <person name="Norbertzcak H."/>
            <person name="Harris B."/>
            <person name="Ormond D."/>
            <person name="Rance R."/>
            <person name="Quail M.A."/>
            <person name="Parkhill J."/>
            <person name="Stephens R.S."/>
            <person name="Clarke I.N."/>
        </authorList>
    </citation>
    <scope>NUCLEOTIDE SEQUENCE [LARGE SCALE GENOMIC DNA]</scope>
    <source>
        <strain>UCH-1/proctitis</strain>
    </source>
</reference>